<sequence length="489" mass="52414">MAVFAIQRLYIGGAYVDATSGETFDTLDPATGETLASVQQASAADVERAVQSAREGQREWAALTAMQRSRVLRRAVEILRERNDELAALETRDTGKPIAETLAVDIATGADVIEYYAGLATAIEGQQIPLRPTSFVYTRREPLGVCAGIGAWNYPIQIACWKSAPALAAGNAMIFKPSEITPLSALKLAEIYTEAGVPAGVFNVVQGDGRVGAMLAAHPDIEKISFTGGVETGKKVMSLAGASSLKEVTMELGGKSPLLVFDDADLERAADIAMSANFFSSGQVCTNGTRVFVQRGVLERFEALVLERVKRIRVGAPTNAATNFGPLASAAQLQKVLGYIESGKQEGARLMAGGKRLTEGHFGNGQYVEPTVFTGCHDDMRIVREEIFGPVMSILVFDDEDEAIARANRTAYGLAAGVVTGNLARAHRVIHRLEAGICWINTWGESPAEMPVGGYKQSGVGRENGLTTLEHYTRIKSVQVELGPYQPVF</sequence>
<feature type="chain" id="PRO_1000047042" description="Betaine aldehyde dehydrogenase">
    <location>
        <begin position="1"/>
        <end position="489"/>
    </location>
</feature>
<feature type="active site" description="Charge relay system" evidence="1">
    <location>
        <position position="162"/>
    </location>
</feature>
<feature type="active site" description="Proton acceptor" evidence="1">
    <location>
        <position position="251"/>
    </location>
</feature>
<feature type="active site" description="Nucleophile" evidence="1">
    <location>
        <position position="285"/>
    </location>
</feature>
<feature type="active site" description="Charge relay system" evidence="1">
    <location>
        <position position="463"/>
    </location>
</feature>
<feature type="binding site" evidence="1">
    <location>
        <position position="26"/>
    </location>
    <ligand>
        <name>K(+)</name>
        <dbReference type="ChEBI" id="CHEBI:29103"/>
        <label>1</label>
    </ligand>
</feature>
<feature type="binding site" evidence="1">
    <location>
        <position position="93"/>
    </location>
    <ligand>
        <name>K(+)</name>
        <dbReference type="ChEBI" id="CHEBI:29103"/>
        <label>1</label>
    </ligand>
</feature>
<feature type="binding site" evidence="1">
    <location>
        <begin position="150"/>
        <end position="152"/>
    </location>
    <ligand>
        <name>NAD(+)</name>
        <dbReference type="ChEBI" id="CHEBI:57540"/>
    </ligand>
</feature>
<feature type="binding site" evidence="1">
    <location>
        <begin position="176"/>
        <end position="179"/>
    </location>
    <ligand>
        <name>NAD(+)</name>
        <dbReference type="ChEBI" id="CHEBI:57540"/>
    </ligand>
</feature>
<feature type="binding site" evidence="1">
    <location>
        <position position="180"/>
    </location>
    <ligand>
        <name>K(+)</name>
        <dbReference type="ChEBI" id="CHEBI:29103"/>
        <label>1</label>
    </ligand>
</feature>
<feature type="binding site" evidence="1">
    <location>
        <begin position="229"/>
        <end position="232"/>
    </location>
    <ligand>
        <name>NAD(+)</name>
        <dbReference type="ChEBI" id="CHEBI:57540"/>
    </ligand>
</feature>
<feature type="binding site" evidence="1">
    <location>
        <position position="245"/>
    </location>
    <ligand>
        <name>K(+)</name>
        <dbReference type="ChEBI" id="CHEBI:29103"/>
        <label>2</label>
    </ligand>
</feature>
<feature type="binding site" evidence="1">
    <location>
        <position position="253"/>
    </location>
    <ligand>
        <name>NAD(+)</name>
        <dbReference type="ChEBI" id="CHEBI:57540"/>
    </ligand>
</feature>
<feature type="binding site" description="covalent" evidence="1">
    <location>
        <position position="285"/>
    </location>
    <ligand>
        <name>NAD(+)</name>
        <dbReference type="ChEBI" id="CHEBI:57540"/>
    </ligand>
</feature>
<feature type="binding site" evidence="1">
    <location>
        <position position="386"/>
    </location>
    <ligand>
        <name>NAD(+)</name>
        <dbReference type="ChEBI" id="CHEBI:57540"/>
    </ligand>
</feature>
<feature type="binding site" evidence="1">
    <location>
        <position position="456"/>
    </location>
    <ligand>
        <name>K(+)</name>
        <dbReference type="ChEBI" id="CHEBI:29103"/>
        <label>2</label>
    </ligand>
</feature>
<feature type="binding site" evidence="1">
    <location>
        <position position="459"/>
    </location>
    <ligand>
        <name>K(+)</name>
        <dbReference type="ChEBI" id="CHEBI:29103"/>
        <label>2</label>
    </ligand>
</feature>
<feature type="site" description="Seems to be a necessary countercharge to the potassium cations" evidence="1">
    <location>
        <position position="247"/>
    </location>
</feature>
<feature type="modified residue" description="Cysteine sulfenic acid (-SOH)" evidence="1">
    <location>
        <position position="285"/>
    </location>
</feature>
<proteinExistence type="inferred from homology"/>
<keyword id="KW-0479">Metal-binding</keyword>
<keyword id="KW-0520">NAD</keyword>
<keyword id="KW-0521">NADP</keyword>
<keyword id="KW-0558">Oxidation</keyword>
<keyword id="KW-0560">Oxidoreductase</keyword>
<keyword id="KW-0630">Potassium</keyword>
<keyword id="KW-1185">Reference proteome</keyword>
<gene>
    <name evidence="1" type="primary">betB</name>
    <name type="ordered locus">Bxeno_B1405</name>
    <name type="ORF">Bxe_B1591</name>
</gene>
<name>BETB_PARXL</name>
<evidence type="ECO:0000255" key="1">
    <source>
        <dbReference type="HAMAP-Rule" id="MF_00804"/>
    </source>
</evidence>
<protein>
    <recommendedName>
        <fullName evidence="1">Betaine aldehyde dehydrogenase</fullName>
        <shortName evidence="1">BADH</shortName>
        <ecNumber evidence="1">1.2.1.8</ecNumber>
    </recommendedName>
</protein>
<organism>
    <name type="scientific">Paraburkholderia xenovorans (strain LB400)</name>
    <dbReference type="NCBI Taxonomy" id="266265"/>
    <lineage>
        <taxon>Bacteria</taxon>
        <taxon>Pseudomonadati</taxon>
        <taxon>Pseudomonadota</taxon>
        <taxon>Betaproteobacteria</taxon>
        <taxon>Burkholderiales</taxon>
        <taxon>Burkholderiaceae</taxon>
        <taxon>Paraburkholderia</taxon>
    </lineage>
</organism>
<reference key="1">
    <citation type="journal article" date="2006" name="Proc. Natl. Acad. Sci. U.S.A.">
        <title>Burkholderia xenovorans LB400 harbors a multi-replicon, 9.73-Mbp genome shaped for versatility.</title>
        <authorList>
            <person name="Chain P.S.G."/>
            <person name="Denef V.J."/>
            <person name="Konstantinidis K.T."/>
            <person name="Vergez L.M."/>
            <person name="Agullo L."/>
            <person name="Reyes V.L."/>
            <person name="Hauser L."/>
            <person name="Cordova M."/>
            <person name="Gomez L."/>
            <person name="Gonzalez M."/>
            <person name="Land M."/>
            <person name="Lao V."/>
            <person name="Larimer F."/>
            <person name="LiPuma J.J."/>
            <person name="Mahenthiralingam E."/>
            <person name="Malfatti S.A."/>
            <person name="Marx C.J."/>
            <person name="Parnell J.J."/>
            <person name="Ramette A."/>
            <person name="Richardson P."/>
            <person name="Seeger M."/>
            <person name="Smith D."/>
            <person name="Spilker T."/>
            <person name="Sul W.J."/>
            <person name="Tsoi T.V."/>
            <person name="Ulrich L.E."/>
            <person name="Zhulin I.B."/>
            <person name="Tiedje J.M."/>
        </authorList>
    </citation>
    <scope>NUCLEOTIDE SEQUENCE [LARGE SCALE GENOMIC DNA]</scope>
    <source>
        <strain>LB400</strain>
    </source>
</reference>
<dbReference type="EC" id="1.2.1.8" evidence="1"/>
<dbReference type="EMBL" id="CP000271">
    <property type="protein sequence ID" value="ABE34373.1"/>
    <property type="molecule type" value="Genomic_DNA"/>
</dbReference>
<dbReference type="RefSeq" id="WP_011491701.1">
    <property type="nucleotide sequence ID" value="NC_007952.1"/>
</dbReference>
<dbReference type="SMR" id="Q13NG6"/>
<dbReference type="STRING" id="266265.Bxe_B1591"/>
<dbReference type="KEGG" id="bxb:DR64_6894"/>
<dbReference type="KEGG" id="bxe:Bxe_B1591"/>
<dbReference type="PATRIC" id="fig|266265.5.peg.6154"/>
<dbReference type="eggNOG" id="COG1012">
    <property type="taxonomic scope" value="Bacteria"/>
</dbReference>
<dbReference type="OrthoDB" id="6187633at2"/>
<dbReference type="UniPathway" id="UPA00529">
    <property type="reaction ID" value="UER00386"/>
</dbReference>
<dbReference type="Proteomes" id="UP000001817">
    <property type="component" value="Chromosome 2"/>
</dbReference>
<dbReference type="GO" id="GO:0008802">
    <property type="term" value="F:betaine-aldehyde dehydrogenase (NAD+) activity"/>
    <property type="evidence" value="ECO:0007669"/>
    <property type="project" value="UniProtKB-UniRule"/>
</dbReference>
<dbReference type="GO" id="GO:0046872">
    <property type="term" value="F:metal ion binding"/>
    <property type="evidence" value="ECO:0007669"/>
    <property type="project" value="UniProtKB-KW"/>
</dbReference>
<dbReference type="GO" id="GO:0019285">
    <property type="term" value="P:glycine betaine biosynthetic process from choline"/>
    <property type="evidence" value="ECO:0007669"/>
    <property type="project" value="UniProtKB-UniRule"/>
</dbReference>
<dbReference type="CDD" id="cd07090">
    <property type="entry name" value="ALDH_F9_TMBADH"/>
    <property type="match status" value="1"/>
</dbReference>
<dbReference type="FunFam" id="3.40.309.10:FF:000014">
    <property type="entry name" value="NAD/NADP-dependent betaine aldehyde dehydrogenase"/>
    <property type="match status" value="1"/>
</dbReference>
<dbReference type="FunFam" id="3.40.605.10:FF:000007">
    <property type="entry name" value="NAD/NADP-dependent betaine aldehyde dehydrogenase"/>
    <property type="match status" value="1"/>
</dbReference>
<dbReference type="Gene3D" id="3.40.605.10">
    <property type="entry name" value="Aldehyde Dehydrogenase, Chain A, domain 1"/>
    <property type="match status" value="1"/>
</dbReference>
<dbReference type="Gene3D" id="3.40.309.10">
    <property type="entry name" value="Aldehyde Dehydrogenase, Chain A, domain 2"/>
    <property type="match status" value="1"/>
</dbReference>
<dbReference type="HAMAP" id="MF_00804">
    <property type="entry name" value="BADH"/>
    <property type="match status" value="1"/>
</dbReference>
<dbReference type="InterPro" id="IPR016161">
    <property type="entry name" value="Ald_DH/histidinol_DH"/>
</dbReference>
<dbReference type="InterPro" id="IPR016163">
    <property type="entry name" value="Ald_DH_C"/>
</dbReference>
<dbReference type="InterPro" id="IPR016160">
    <property type="entry name" value="Ald_DH_CS_CYS"/>
</dbReference>
<dbReference type="InterPro" id="IPR029510">
    <property type="entry name" value="Ald_DH_CS_GLU"/>
</dbReference>
<dbReference type="InterPro" id="IPR016162">
    <property type="entry name" value="Ald_DH_N"/>
</dbReference>
<dbReference type="InterPro" id="IPR015590">
    <property type="entry name" value="Aldehyde_DH_dom"/>
</dbReference>
<dbReference type="InterPro" id="IPR011264">
    <property type="entry name" value="BADH"/>
</dbReference>
<dbReference type="NCBIfam" id="TIGR01804">
    <property type="entry name" value="BADH"/>
    <property type="match status" value="1"/>
</dbReference>
<dbReference type="NCBIfam" id="NF009725">
    <property type="entry name" value="PRK13252.1"/>
    <property type="match status" value="1"/>
</dbReference>
<dbReference type="PANTHER" id="PTHR11699">
    <property type="entry name" value="ALDEHYDE DEHYDROGENASE-RELATED"/>
    <property type="match status" value="1"/>
</dbReference>
<dbReference type="Pfam" id="PF00171">
    <property type="entry name" value="Aldedh"/>
    <property type="match status" value="1"/>
</dbReference>
<dbReference type="SUPFAM" id="SSF53720">
    <property type="entry name" value="ALDH-like"/>
    <property type="match status" value="1"/>
</dbReference>
<dbReference type="PROSITE" id="PS00070">
    <property type="entry name" value="ALDEHYDE_DEHYDR_CYS"/>
    <property type="match status" value="1"/>
</dbReference>
<dbReference type="PROSITE" id="PS00687">
    <property type="entry name" value="ALDEHYDE_DEHYDR_GLU"/>
    <property type="match status" value="1"/>
</dbReference>
<comment type="function">
    <text evidence="1">Involved in the biosynthesis of the osmoprotectant glycine betaine. Catalyzes the irreversible oxidation of betaine aldehyde to the corresponding acid.</text>
</comment>
<comment type="catalytic activity">
    <reaction evidence="1">
        <text>betaine aldehyde + NAD(+) + H2O = glycine betaine + NADH + 2 H(+)</text>
        <dbReference type="Rhea" id="RHEA:15305"/>
        <dbReference type="ChEBI" id="CHEBI:15377"/>
        <dbReference type="ChEBI" id="CHEBI:15378"/>
        <dbReference type="ChEBI" id="CHEBI:15710"/>
        <dbReference type="ChEBI" id="CHEBI:17750"/>
        <dbReference type="ChEBI" id="CHEBI:57540"/>
        <dbReference type="ChEBI" id="CHEBI:57945"/>
        <dbReference type="EC" id="1.2.1.8"/>
    </reaction>
    <physiologicalReaction direction="left-to-right" evidence="1">
        <dbReference type="Rhea" id="RHEA:15306"/>
    </physiologicalReaction>
</comment>
<comment type="cofactor">
    <cofactor evidence="1">
        <name>K(+)</name>
        <dbReference type="ChEBI" id="CHEBI:29103"/>
    </cofactor>
    <text evidence="1">Binds 2 potassium ions per subunit.</text>
</comment>
<comment type="pathway">
    <text evidence="1">Amine and polyamine biosynthesis; betaine biosynthesis via choline pathway; betaine from betaine aldehyde: step 1/1.</text>
</comment>
<comment type="subunit">
    <text evidence="1">Dimer of dimers.</text>
</comment>
<comment type="similarity">
    <text evidence="1">Belongs to the aldehyde dehydrogenase family.</text>
</comment>
<accession>Q13NG6</accession>